<reference key="1">
    <citation type="submission" date="2009-02" db="EMBL/GenBank/DDBJ databases">
        <title>Genome sequence of Bacillus cereus 03BB102.</title>
        <authorList>
            <person name="Dodson R.J."/>
            <person name="Jackson P."/>
            <person name="Munk A.C."/>
            <person name="Brettin T."/>
            <person name="Bruce D."/>
            <person name="Detter C."/>
            <person name="Tapia R."/>
            <person name="Han C."/>
            <person name="Sutton G."/>
            <person name="Sims D."/>
        </authorList>
    </citation>
    <scope>NUCLEOTIDE SEQUENCE [LARGE SCALE GENOMIC DNA]</scope>
    <source>
        <strain>03BB102</strain>
    </source>
</reference>
<dbReference type="EC" id="2.5.1.6" evidence="1"/>
<dbReference type="EMBL" id="CP001407">
    <property type="protein sequence ID" value="ACO29611.1"/>
    <property type="molecule type" value="Genomic_DNA"/>
</dbReference>
<dbReference type="RefSeq" id="WP_000163126.1">
    <property type="nucleotide sequence ID" value="NZ_CP009318.1"/>
</dbReference>
<dbReference type="SMR" id="C1EW36"/>
<dbReference type="KEGG" id="bcx:BCA_4891"/>
<dbReference type="PATRIC" id="fig|572264.18.peg.4839"/>
<dbReference type="UniPathway" id="UPA00315">
    <property type="reaction ID" value="UER00080"/>
</dbReference>
<dbReference type="Proteomes" id="UP000002210">
    <property type="component" value="Chromosome"/>
</dbReference>
<dbReference type="GO" id="GO:0005737">
    <property type="term" value="C:cytoplasm"/>
    <property type="evidence" value="ECO:0007669"/>
    <property type="project" value="UniProtKB-SubCell"/>
</dbReference>
<dbReference type="GO" id="GO:0005524">
    <property type="term" value="F:ATP binding"/>
    <property type="evidence" value="ECO:0007669"/>
    <property type="project" value="UniProtKB-UniRule"/>
</dbReference>
<dbReference type="GO" id="GO:0000287">
    <property type="term" value="F:magnesium ion binding"/>
    <property type="evidence" value="ECO:0007669"/>
    <property type="project" value="UniProtKB-UniRule"/>
</dbReference>
<dbReference type="GO" id="GO:0004478">
    <property type="term" value="F:methionine adenosyltransferase activity"/>
    <property type="evidence" value="ECO:0007669"/>
    <property type="project" value="UniProtKB-UniRule"/>
</dbReference>
<dbReference type="GO" id="GO:0006730">
    <property type="term" value="P:one-carbon metabolic process"/>
    <property type="evidence" value="ECO:0007669"/>
    <property type="project" value="UniProtKB-KW"/>
</dbReference>
<dbReference type="GO" id="GO:0006556">
    <property type="term" value="P:S-adenosylmethionine biosynthetic process"/>
    <property type="evidence" value="ECO:0007669"/>
    <property type="project" value="UniProtKB-UniRule"/>
</dbReference>
<dbReference type="CDD" id="cd18079">
    <property type="entry name" value="S-AdoMet_synt"/>
    <property type="match status" value="1"/>
</dbReference>
<dbReference type="FunFam" id="3.30.300.10:FF:000003">
    <property type="entry name" value="S-adenosylmethionine synthase"/>
    <property type="match status" value="1"/>
</dbReference>
<dbReference type="FunFam" id="3.30.300.10:FF:000004">
    <property type="entry name" value="S-adenosylmethionine synthase"/>
    <property type="match status" value="1"/>
</dbReference>
<dbReference type="Gene3D" id="3.30.300.10">
    <property type="match status" value="3"/>
</dbReference>
<dbReference type="HAMAP" id="MF_00086">
    <property type="entry name" value="S_AdoMet_synth1"/>
    <property type="match status" value="1"/>
</dbReference>
<dbReference type="InterPro" id="IPR022631">
    <property type="entry name" value="ADOMET_SYNTHASE_CS"/>
</dbReference>
<dbReference type="InterPro" id="IPR022630">
    <property type="entry name" value="S-AdoMet_synt_C"/>
</dbReference>
<dbReference type="InterPro" id="IPR022629">
    <property type="entry name" value="S-AdoMet_synt_central"/>
</dbReference>
<dbReference type="InterPro" id="IPR022628">
    <property type="entry name" value="S-AdoMet_synt_N"/>
</dbReference>
<dbReference type="InterPro" id="IPR002133">
    <property type="entry name" value="S-AdoMet_synthetase"/>
</dbReference>
<dbReference type="InterPro" id="IPR022636">
    <property type="entry name" value="S-AdoMet_synthetase_sfam"/>
</dbReference>
<dbReference type="NCBIfam" id="TIGR01034">
    <property type="entry name" value="metK"/>
    <property type="match status" value="1"/>
</dbReference>
<dbReference type="PANTHER" id="PTHR11964">
    <property type="entry name" value="S-ADENOSYLMETHIONINE SYNTHETASE"/>
    <property type="match status" value="1"/>
</dbReference>
<dbReference type="Pfam" id="PF02773">
    <property type="entry name" value="S-AdoMet_synt_C"/>
    <property type="match status" value="1"/>
</dbReference>
<dbReference type="Pfam" id="PF02772">
    <property type="entry name" value="S-AdoMet_synt_M"/>
    <property type="match status" value="1"/>
</dbReference>
<dbReference type="Pfam" id="PF00438">
    <property type="entry name" value="S-AdoMet_synt_N"/>
    <property type="match status" value="1"/>
</dbReference>
<dbReference type="PIRSF" id="PIRSF000497">
    <property type="entry name" value="MAT"/>
    <property type="match status" value="1"/>
</dbReference>
<dbReference type="SUPFAM" id="SSF55973">
    <property type="entry name" value="S-adenosylmethionine synthetase"/>
    <property type="match status" value="3"/>
</dbReference>
<dbReference type="PROSITE" id="PS00376">
    <property type="entry name" value="ADOMET_SYNTHASE_1"/>
    <property type="match status" value="1"/>
</dbReference>
<dbReference type="PROSITE" id="PS00377">
    <property type="entry name" value="ADOMET_SYNTHASE_2"/>
    <property type="match status" value="1"/>
</dbReference>
<organism>
    <name type="scientific">Bacillus cereus (strain 03BB102)</name>
    <dbReference type="NCBI Taxonomy" id="572264"/>
    <lineage>
        <taxon>Bacteria</taxon>
        <taxon>Bacillati</taxon>
        <taxon>Bacillota</taxon>
        <taxon>Bacilli</taxon>
        <taxon>Bacillales</taxon>
        <taxon>Bacillaceae</taxon>
        <taxon>Bacillus</taxon>
        <taxon>Bacillus cereus group</taxon>
    </lineage>
</organism>
<gene>
    <name evidence="1" type="primary">metK</name>
    <name type="ordered locus">BCA_4891</name>
</gene>
<protein>
    <recommendedName>
        <fullName evidence="1">S-adenosylmethionine synthase</fullName>
        <shortName evidence="1">AdoMet synthase</shortName>
        <ecNumber evidence="1">2.5.1.6</ecNumber>
    </recommendedName>
    <alternativeName>
        <fullName evidence="1">MAT</fullName>
    </alternativeName>
    <alternativeName>
        <fullName evidence="1">Methionine adenosyltransferase</fullName>
    </alternativeName>
</protein>
<comment type="function">
    <text evidence="1">Catalyzes the formation of S-adenosylmethionine (AdoMet) from methionine and ATP. The overall synthetic reaction is composed of two sequential steps, AdoMet formation and the subsequent tripolyphosphate hydrolysis which occurs prior to release of AdoMet from the enzyme.</text>
</comment>
<comment type="catalytic activity">
    <reaction evidence="1">
        <text>L-methionine + ATP + H2O = S-adenosyl-L-methionine + phosphate + diphosphate</text>
        <dbReference type="Rhea" id="RHEA:21080"/>
        <dbReference type="ChEBI" id="CHEBI:15377"/>
        <dbReference type="ChEBI" id="CHEBI:30616"/>
        <dbReference type="ChEBI" id="CHEBI:33019"/>
        <dbReference type="ChEBI" id="CHEBI:43474"/>
        <dbReference type="ChEBI" id="CHEBI:57844"/>
        <dbReference type="ChEBI" id="CHEBI:59789"/>
        <dbReference type="EC" id="2.5.1.6"/>
    </reaction>
</comment>
<comment type="cofactor">
    <cofactor evidence="1">
        <name>Mg(2+)</name>
        <dbReference type="ChEBI" id="CHEBI:18420"/>
    </cofactor>
    <text evidence="1">Binds 2 divalent ions per subunit.</text>
</comment>
<comment type="cofactor">
    <cofactor evidence="1">
        <name>K(+)</name>
        <dbReference type="ChEBI" id="CHEBI:29103"/>
    </cofactor>
    <text evidence="1">Binds 1 potassium ion per subunit.</text>
</comment>
<comment type="pathway">
    <text evidence="1">Amino-acid biosynthesis; S-adenosyl-L-methionine biosynthesis; S-adenosyl-L-methionine from L-methionine: step 1/1.</text>
</comment>
<comment type="subunit">
    <text evidence="1">Homotetramer; dimer of dimers.</text>
</comment>
<comment type="subcellular location">
    <subcellularLocation>
        <location evidence="1">Cytoplasm</location>
    </subcellularLocation>
</comment>
<comment type="similarity">
    <text evidence="1">Belongs to the AdoMet synthase family.</text>
</comment>
<evidence type="ECO:0000255" key="1">
    <source>
        <dbReference type="HAMAP-Rule" id="MF_00086"/>
    </source>
</evidence>
<feature type="chain" id="PRO_1000196684" description="S-adenosylmethionine synthase">
    <location>
        <begin position="1"/>
        <end position="399"/>
    </location>
</feature>
<feature type="region of interest" description="Flexible loop" evidence="1">
    <location>
        <begin position="101"/>
        <end position="111"/>
    </location>
</feature>
<feature type="binding site" description="in other chain" evidence="1">
    <location>
        <position position="17"/>
    </location>
    <ligand>
        <name>ATP</name>
        <dbReference type="ChEBI" id="CHEBI:30616"/>
        <note>ligand shared between two neighboring subunits</note>
    </ligand>
</feature>
<feature type="binding site" evidence="1">
    <location>
        <position position="19"/>
    </location>
    <ligand>
        <name>Mg(2+)</name>
        <dbReference type="ChEBI" id="CHEBI:18420"/>
    </ligand>
</feature>
<feature type="binding site" evidence="1">
    <location>
        <position position="45"/>
    </location>
    <ligand>
        <name>K(+)</name>
        <dbReference type="ChEBI" id="CHEBI:29103"/>
    </ligand>
</feature>
<feature type="binding site" description="in other chain" evidence="1">
    <location>
        <position position="58"/>
    </location>
    <ligand>
        <name>L-methionine</name>
        <dbReference type="ChEBI" id="CHEBI:57844"/>
        <note>ligand shared between two neighboring subunits</note>
    </ligand>
</feature>
<feature type="binding site" description="in other chain" evidence="1">
    <location>
        <position position="101"/>
    </location>
    <ligand>
        <name>L-methionine</name>
        <dbReference type="ChEBI" id="CHEBI:57844"/>
        <note>ligand shared between two neighboring subunits</note>
    </ligand>
</feature>
<feature type="binding site" description="in other chain" evidence="1">
    <location>
        <begin position="177"/>
        <end position="179"/>
    </location>
    <ligand>
        <name>ATP</name>
        <dbReference type="ChEBI" id="CHEBI:30616"/>
        <note>ligand shared between two neighboring subunits</note>
    </ligand>
</feature>
<feature type="binding site" description="in other chain" evidence="1">
    <location>
        <begin position="244"/>
        <end position="245"/>
    </location>
    <ligand>
        <name>ATP</name>
        <dbReference type="ChEBI" id="CHEBI:30616"/>
        <note>ligand shared between two neighboring subunits</note>
    </ligand>
</feature>
<feature type="binding site" evidence="1">
    <location>
        <position position="253"/>
    </location>
    <ligand>
        <name>ATP</name>
        <dbReference type="ChEBI" id="CHEBI:30616"/>
        <note>ligand shared between two neighboring subunits</note>
    </ligand>
</feature>
<feature type="binding site" evidence="1">
    <location>
        <position position="253"/>
    </location>
    <ligand>
        <name>L-methionine</name>
        <dbReference type="ChEBI" id="CHEBI:57844"/>
        <note>ligand shared between two neighboring subunits</note>
    </ligand>
</feature>
<feature type="binding site" description="in other chain" evidence="1">
    <location>
        <begin position="259"/>
        <end position="260"/>
    </location>
    <ligand>
        <name>ATP</name>
        <dbReference type="ChEBI" id="CHEBI:30616"/>
        <note>ligand shared between two neighboring subunits</note>
    </ligand>
</feature>
<feature type="binding site" evidence="1">
    <location>
        <position position="276"/>
    </location>
    <ligand>
        <name>ATP</name>
        <dbReference type="ChEBI" id="CHEBI:30616"/>
        <note>ligand shared between two neighboring subunits</note>
    </ligand>
</feature>
<feature type="binding site" evidence="1">
    <location>
        <position position="280"/>
    </location>
    <ligand>
        <name>ATP</name>
        <dbReference type="ChEBI" id="CHEBI:30616"/>
        <note>ligand shared between two neighboring subunits</note>
    </ligand>
</feature>
<feature type="binding site" description="in other chain" evidence="1">
    <location>
        <position position="284"/>
    </location>
    <ligand>
        <name>L-methionine</name>
        <dbReference type="ChEBI" id="CHEBI:57844"/>
        <note>ligand shared between two neighboring subunits</note>
    </ligand>
</feature>
<name>METK_BACC3</name>
<accession>C1EW36</accession>
<proteinExistence type="inferred from homology"/>
<keyword id="KW-0067">ATP-binding</keyword>
<keyword id="KW-0963">Cytoplasm</keyword>
<keyword id="KW-0460">Magnesium</keyword>
<keyword id="KW-0479">Metal-binding</keyword>
<keyword id="KW-0547">Nucleotide-binding</keyword>
<keyword id="KW-0554">One-carbon metabolism</keyword>
<keyword id="KW-0630">Potassium</keyword>
<keyword id="KW-0808">Transferase</keyword>
<sequence>MTKKRHLFTSESVTEGHPDKICDQISDSILDAILSKDANARVACETTVTTGLVLVAGEITTSTYVDIPKIVRETIQGIGYTRAKYGFDAETCAVLTSIDEQSADIAMGVDQALEAREGQMTDAEIEAIGAGDQGLMFGFACNETQELMPLPISLAHKLARRLTEVRKNDTLSYLRPDGKTQVTVEYDENGKPVRVDTIVISTQHHPDVTWEEIDRDLKEHVIKAVVPAELIDGETKFFINPTGRFVIGGPQGDAGLTGRKIIVDTYGGYARHGGGAFSGKDATKVDRSAAYAARYVAKNIVAAGLAEKAEVQLAYAIGVAQPVSISVDTFGTGKVSEDVLVELVRNNFDLRPAGIIKMLDLRRPIYKQTAAYGHFGRTDVDLSWERTDKAVALKEQAGL</sequence>